<reference key="1">
    <citation type="journal article" date="2005" name="Proc. Natl. Acad. Sci. U.S.A.">
        <title>Evolutionary conservation and diversification of Rh family genes and proteins.</title>
        <authorList>
            <person name="Huang C.-H."/>
            <person name="Peng J."/>
        </authorList>
    </citation>
    <scope>NUCLEOTIDE SEQUENCE [MRNA]</scope>
</reference>
<accession>Q4VUZ1</accession>
<proteinExistence type="evidence at transcript level"/>
<feature type="chain" id="PRO_0000283590" description="Ammonium transporter Rh type C">
    <location>
        <begin position="1"/>
        <end position="494"/>
    </location>
</feature>
<feature type="topological domain" description="Cytoplasmic" evidence="2">
    <location>
        <begin position="1"/>
        <end position="22"/>
    </location>
</feature>
<feature type="transmembrane region" description="Helical" evidence="2">
    <location>
        <begin position="23"/>
        <end position="43"/>
    </location>
</feature>
<feature type="topological domain" description="Extracellular" evidence="2">
    <location>
        <begin position="44"/>
        <end position="74"/>
    </location>
</feature>
<feature type="transmembrane region" description="Helical" evidence="2">
    <location>
        <begin position="75"/>
        <end position="95"/>
    </location>
</feature>
<feature type="topological domain" description="Cytoplasmic" evidence="2">
    <location>
        <begin position="96"/>
        <end position="99"/>
    </location>
</feature>
<feature type="transmembrane region" description="Helical" evidence="2">
    <location>
        <begin position="100"/>
        <end position="120"/>
    </location>
</feature>
<feature type="topological domain" description="Extracellular" evidence="2">
    <location>
        <begin position="121"/>
        <end position="133"/>
    </location>
</feature>
<feature type="transmembrane region" description="Helical" evidence="2">
    <location>
        <begin position="134"/>
        <end position="154"/>
    </location>
</feature>
<feature type="topological domain" description="Cytoplasmic" evidence="2">
    <location>
        <begin position="155"/>
        <end position="166"/>
    </location>
</feature>
<feature type="transmembrane region" description="Helical" evidence="2">
    <location>
        <begin position="167"/>
        <end position="187"/>
    </location>
</feature>
<feature type="topological domain" description="Extracellular" evidence="2">
    <location>
        <begin position="188"/>
        <end position="194"/>
    </location>
</feature>
<feature type="transmembrane region" description="Helical" evidence="2">
    <location>
        <begin position="195"/>
        <end position="215"/>
    </location>
</feature>
<feature type="topological domain" description="Cytoplasmic" evidence="2">
    <location>
        <begin position="216"/>
        <end position="234"/>
    </location>
</feature>
<feature type="transmembrane region" description="Helical" evidence="2">
    <location>
        <begin position="235"/>
        <end position="255"/>
    </location>
</feature>
<feature type="topological domain" description="Extracellular" evidence="2">
    <location>
        <begin position="256"/>
        <end position="265"/>
    </location>
</feature>
<feature type="transmembrane region" description="Helical" evidence="2">
    <location>
        <begin position="266"/>
        <end position="286"/>
    </location>
</feature>
<feature type="topological domain" description="Cytoplasmic" evidence="2">
    <location>
        <begin position="287"/>
        <end position="297"/>
    </location>
</feature>
<feature type="transmembrane region" description="Helical" evidence="2">
    <location>
        <begin position="298"/>
        <end position="318"/>
    </location>
</feature>
<feature type="topological domain" description="Extracellular" evidence="2">
    <location>
        <position position="319"/>
    </location>
</feature>
<feature type="transmembrane region" description="Helical" evidence="2">
    <location>
        <begin position="320"/>
        <end position="340"/>
    </location>
</feature>
<feature type="topological domain" description="Cytoplasmic" evidence="2">
    <location>
        <begin position="341"/>
        <end position="358"/>
    </location>
</feature>
<feature type="transmembrane region" description="Helical" evidence="2">
    <location>
        <begin position="359"/>
        <end position="379"/>
    </location>
</feature>
<feature type="topological domain" description="Extracellular" evidence="2">
    <location>
        <begin position="380"/>
        <end position="411"/>
    </location>
</feature>
<feature type="transmembrane region" description="Helical" evidence="2">
    <location>
        <begin position="412"/>
        <end position="432"/>
    </location>
</feature>
<feature type="topological domain" description="Cytoplasmic" evidence="2">
    <location>
        <begin position="433"/>
        <end position="494"/>
    </location>
</feature>
<feature type="glycosylation site" description="N-linked (GlcNAc...) asparagine" evidence="2">
    <location>
        <position position="61"/>
    </location>
</feature>
<name>RHCG_ONCMY</name>
<evidence type="ECO:0000250" key="1"/>
<evidence type="ECO:0000255" key="2"/>
<evidence type="ECO:0000305" key="3"/>
<organism>
    <name type="scientific">Oncorhynchus mykiss</name>
    <name type="common">Rainbow trout</name>
    <name type="synonym">Salmo gairdneri</name>
    <dbReference type="NCBI Taxonomy" id="8022"/>
    <lineage>
        <taxon>Eukaryota</taxon>
        <taxon>Metazoa</taxon>
        <taxon>Chordata</taxon>
        <taxon>Craniata</taxon>
        <taxon>Vertebrata</taxon>
        <taxon>Euteleostomi</taxon>
        <taxon>Actinopterygii</taxon>
        <taxon>Neopterygii</taxon>
        <taxon>Teleostei</taxon>
        <taxon>Protacanthopterygii</taxon>
        <taxon>Salmoniformes</taxon>
        <taxon>Salmonidae</taxon>
        <taxon>Salmoninae</taxon>
        <taxon>Oncorhynchus</taxon>
    </lineage>
</organism>
<keyword id="KW-0924">Ammonia transport</keyword>
<keyword id="KW-1003">Cell membrane</keyword>
<keyword id="KW-0325">Glycoprotein</keyword>
<keyword id="KW-0472">Membrane</keyword>
<keyword id="KW-0812">Transmembrane</keyword>
<keyword id="KW-1133">Transmembrane helix</keyword>
<keyword id="KW-0813">Transport</keyword>
<sequence length="494" mass="54714">MGNFIQGCKDYFSQQKNTNIRLTLPVVCFVWQIAMIILFGVFIRYDEESDTHWVETKAHDNITSDIENDFYFRYPSFQDVHVMIFVGFGFLMTFLKRYSFGAVGFNFLIASFGLQWALLMQGWFHSLDPQTGKIFIGVESLINADFCVAGCLIAYGAVLGKVSPVQLLVMTLFGVTLFAVEEYIILNLLHARDAGGSMVIHTFGGYYGLTISWVLYRPNLHQSKRMQGSVYHSDIFAMIGTLFLWMFWPSFNSAITDHGDGQHRAVINTYLCLASTVLTTVAISSFSQKTGKLDMVHIQNSTLAGGVALGTAAEFMISPYGALIVGFLCGIISTMGYIFISPFLEKTLKIQDTCGIHNLHAMPGVIGGIVGAITAAAASESVYGKHALINTFDFTGDFKDRTVLTQGGYQAAGMCVSIVFGVAGGAIVGSILKLPIWGDPADENCFDDEVYWELPDEEEEHQESIPPILEYNNHMIHKRQDLSESNFSVEHCES</sequence>
<dbReference type="EMBL" id="AY619986">
    <property type="protein sequence ID" value="AAU89494.1"/>
    <property type="molecule type" value="mRNA"/>
</dbReference>
<dbReference type="RefSeq" id="NP_001117995.1">
    <property type="nucleotide sequence ID" value="NM_001124523.1"/>
</dbReference>
<dbReference type="SMR" id="Q4VUZ1"/>
<dbReference type="GlyCosmos" id="Q4VUZ1">
    <property type="glycosylation" value="1 site, No reported glycans"/>
</dbReference>
<dbReference type="GeneID" id="100136259"/>
<dbReference type="KEGG" id="omy:100136259"/>
<dbReference type="CTD" id="51458"/>
<dbReference type="OrthoDB" id="534912at2759"/>
<dbReference type="Proteomes" id="UP000694395">
    <property type="component" value="Unplaced"/>
</dbReference>
<dbReference type="GO" id="GO:0016324">
    <property type="term" value="C:apical plasma membrane"/>
    <property type="evidence" value="ECO:0007669"/>
    <property type="project" value="UniProtKB-SubCell"/>
</dbReference>
<dbReference type="GO" id="GO:0008519">
    <property type="term" value="F:ammonium channel activity"/>
    <property type="evidence" value="ECO:0007669"/>
    <property type="project" value="InterPro"/>
</dbReference>
<dbReference type="GO" id="GO:0097272">
    <property type="term" value="P:ammonium homeostasis"/>
    <property type="evidence" value="ECO:0007669"/>
    <property type="project" value="TreeGrafter"/>
</dbReference>
<dbReference type="FunFam" id="1.10.3430.10:FF:000001">
    <property type="entry name" value="Ammonium transporter Rh type C"/>
    <property type="match status" value="1"/>
</dbReference>
<dbReference type="Gene3D" id="1.10.3430.10">
    <property type="entry name" value="Ammonium transporter AmtB like domains"/>
    <property type="match status" value="1"/>
</dbReference>
<dbReference type="InterPro" id="IPR029020">
    <property type="entry name" value="Ammonium/urea_transptr"/>
</dbReference>
<dbReference type="InterPro" id="IPR024041">
    <property type="entry name" value="NH4_transpt_AmtB-like_dom"/>
</dbReference>
<dbReference type="InterPro" id="IPR002229">
    <property type="entry name" value="RhesusRHD"/>
</dbReference>
<dbReference type="PANTHER" id="PTHR11730">
    <property type="entry name" value="AMMONIUM TRANSPORTER"/>
    <property type="match status" value="1"/>
</dbReference>
<dbReference type="PANTHER" id="PTHR11730:SF30">
    <property type="entry name" value="AMMONIUM TRANSPORTER RH TYPE C"/>
    <property type="match status" value="1"/>
</dbReference>
<dbReference type="Pfam" id="PF00909">
    <property type="entry name" value="Ammonium_transp"/>
    <property type="match status" value="1"/>
</dbReference>
<dbReference type="PRINTS" id="PR00342">
    <property type="entry name" value="RHESUSRHD"/>
</dbReference>
<dbReference type="SUPFAM" id="SSF111352">
    <property type="entry name" value="Ammonium transporter"/>
    <property type="match status" value="1"/>
</dbReference>
<comment type="function">
    <text evidence="1">Functions as an ammonia transporter. May play a role in the elimination of ammonia in the gill (By similarity).</text>
</comment>
<comment type="subunit">
    <text>Homotrimer.</text>
</comment>
<comment type="subcellular location">
    <subcellularLocation>
        <location evidence="1">Apical cell membrane</location>
        <topology evidence="1">Multi-pass membrane protein</topology>
    </subcellularLocation>
</comment>
<comment type="similarity">
    <text evidence="3">Belongs to the ammonium transporter (TC 2.A.49) family. Rh subfamily.</text>
</comment>
<protein>
    <recommendedName>
        <fullName>Ammonium transporter Rh type C</fullName>
    </recommendedName>
    <alternativeName>
        <fullName>Rhesus blood group family type C glycoprotein</fullName>
        <shortName>Rh family type C glycoprotein</shortName>
        <shortName>Rh type C glycoprotein</shortName>
    </alternativeName>
</protein>
<gene>
    <name type="primary">rhcg</name>
</gene>